<evidence type="ECO:0000255" key="1">
    <source>
        <dbReference type="HAMAP-Rule" id="MF_01321"/>
    </source>
</evidence>
<organism>
    <name type="scientific">Porphyra purpurea</name>
    <name type="common">Red seaweed</name>
    <name type="synonym">Ulva purpurea</name>
    <dbReference type="NCBI Taxonomy" id="2787"/>
    <lineage>
        <taxon>Eukaryota</taxon>
        <taxon>Rhodophyta</taxon>
        <taxon>Bangiophyceae</taxon>
        <taxon>Bangiales</taxon>
        <taxon>Bangiaceae</taxon>
        <taxon>Porphyra</taxon>
    </lineage>
</organism>
<keyword id="KW-0150">Chloroplast</keyword>
<keyword id="KW-0240">DNA-directed RNA polymerase</keyword>
<keyword id="KW-0548">Nucleotidyltransferase</keyword>
<keyword id="KW-0934">Plastid</keyword>
<keyword id="KW-0804">Transcription</keyword>
<keyword id="KW-0808">Transferase</keyword>
<protein>
    <recommendedName>
        <fullName evidence="1">DNA-directed RNA polymerase subunit beta</fullName>
        <ecNumber evidence="1">2.7.7.6</ecNumber>
    </recommendedName>
    <alternativeName>
        <fullName evidence="1">PEP</fullName>
    </alternativeName>
    <alternativeName>
        <fullName evidence="1">Plastid-encoded RNA polymerase subunit beta</fullName>
        <shortName evidence="1">RNA polymerase subunit beta</shortName>
    </alternativeName>
</protein>
<sequence>MVQRISLKNKLLPDLVEIQRDSFKWFLLEGLTEVLEFFPNISDPTSRLELQLFGKEYKIKFPRYSVRQAKSRDRTYSAQIYVPAKLTRKDIDLPSKDQNKTIKSLDLSSNHLQFSAEKQIKNKKYKKRLVFIGDLPIMTNRGTFIVSGTERVIINQIIRSPGIYYKQDIDKNGKQIYSASLISNRGSWLKFEIDPKGEIWIRIDKTHKVNAYIFLRAIGLNKNEIQKGLSKYAFLISASQSYSVKELAKEIGKNDIEEVTDEEALLIVYSKLRPNEPATVPVAKQMLYSRFFDPKRYDLGEVGRYKINKKLGLNIPKTFRVLSPQDILSSIDYLINIKDKNSGNLDDIDHLGNRRVRSVGELLQNQFRVGLNRLERIIRERMMICDIDSLSLSNLINPKPLIASVREFFGSSQLSQFMDQTNPVAELTHKRRISALGPGGFNKDRAGFAVRDLHPSHYGRICPIETPEGPNAGLIGSLATCARVNIFGFIETPFYPVHNGQVDYSNNPIYLTADEEDDFRVAPGDVKVNVQNYIEGDIIPVRYRQEFVTTIPNQVDYIAISPIQVISAATSLIPFLEHDDANRALMGSNMQRQAVPLLYPEKPIIGTGLETKIARDSGMVVISRTSGCVNYVSANKIGIQDNNGRTVLYRLKKYYRSNQDTCINQRPIVWVGEKIVVGQTLADGASTDCGEIALGRNILVAYMPWEGYNYEDAFLISERLVYEDVYTSIHIEKYEVECRQTKLGPEEITREIPNVSDHSLKDLDRNGIVVCGSWVEAGDILVGKITPKGEADQLPEGKLLRAIFGEKARDVRDTSLRLPNAAKGRVVNVRVFTRQKGDELPPGTNAMIRVYVAQKRKIQVGDKMAGRHGNKGIISRILPKQDMPYLCDGTPVDIVLNPLGVPSRMNVGQVFECLLGLAGGYLDKRFKIIPFDEMYGAEASRALVNRKLQEASILTKNKWIFNDQHPGKMQVFDGRTGEPFDNPVTIGRAYMLKLVHLVDDKIHARSTGPYSLVTQQPLGGRAQHGGQRLGEMEVWALEAFGAAYTLQELLTVKSDDMQARNEALNAIVKGKPIPKPGTPESFKVLMRELQSLGLDIAVHKLKLFENGQRRTVEVDLMSDSKEDRVARSNYEVLPVDDFEQFLY</sequence>
<name>RPOB_PORPU</name>
<reference key="1">
    <citation type="journal article" date="1995" name="Plant Mol. Biol. Rep.">
        <title>Complete nucleotide sequence of the Porphyra purpurea chloroplast genome.</title>
        <authorList>
            <person name="Reith M.E."/>
            <person name="Munholland J."/>
        </authorList>
    </citation>
    <scope>NUCLEOTIDE SEQUENCE [LARGE SCALE GENOMIC DNA]</scope>
    <source>
        <strain>Avonport</strain>
    </source>
</reference>
<geneLocation type="chloroplast"/>
<gene>
    <name evidence="1" type="primary">rpoB</name>
</gene>
<proteinExistence type="inferred from homology"/>
<dbReference type="EC" id="2.7.7.6" evidence="1"/>
<dbReference type="EMBL" id="U38804">
    <property type="protein sequence ID" value="AAC08138.1"/>
    <property type="molecule type" value="Genomic_DNA"/>
</dbReference>
<dbReference type="PIR" id="S73173">
    <property type="entry name" value="S73173"/>
</dbReference>
<dbReference type="RefSeq" id="NP_053862.1">
    <property type="nucleotide sequence ID" value="NC_000925.1"/>
</dbReference>
<dbReference type="SMR" id="P51252"/>
<dbReference type="GeneID" id="809881"/>
<dbReference type="GO" id="GO:0009507">
    <property type="term" value="C:chloroplast"/>
    <property type="evidence" value="ECO:0007669"/>
    <property type="project" value="UniProtKB-SubCell"/>
</dbReference>
<dbReference type="GO" id="GO:0000428">
    <property type="term" value="C:DNA-directed RNA polymerase complex"/>
    <property type="evidence" value="ECO:0007669"/>
    <property type="project" value="UniProtKB-KW"/>
</dbReference>
<dbReference type="GO" id="GO:0005739">
    <property type="term" value="C:mitochondrion"/>
    <property type="evidence" value="ECO:0007669"/>
    <property type="project" value="GOC"/>
</dbReference>
<dbReference type="GO" id="GO:0003677">
    <property type="term" value="F:DNA binding"/>
    <property type="evidence" value="ECO:0007669"/>
    <property type="project" value="UniProtKB-UniRule"/>
</dbReference>
<dbReference type="GO" id="GO:0003899">
    <property type="term" value="F:DNA-directed RNA polymerase activity"/>
    <property type="evidence" value="ECO:0007669"/>
    <property type="project" value="UniProtKB-UniRule"/>
</dbReference>
<dbReference type="GO" id="GO:0032549">
    <property type="term" value="F:ribonucleoside binding"/>
    <property type="evidence" value="ECO:0007669"/>
    <property type="project" value="InterPro"/>
</dbReference>
<dbReference type="GO" id="GO:0006351">
    <property type="term" value="P:DNA-templated transcription"/>
    <property type="evidence" value="ECO:0007669"/>
    <property type="project" value="UniProtKB-UniRule"/>
</dbReference>
<dbReference type="CDD" id="cd00653">
    <property type="entry name" value="RNA_pol_B_RPB2"/>
    <property type="match status" value="1"/>
</dbReference>
<dbReference type="Gene3D" id="2.40.50.100">
    <property type="match status" value="1"/>
</dbReference>
<dbReference type="Gene3D" id="2.40.50.150">
    <property type="match status" value="1"/>
</dbReference>
<dbReference type="Gene3D" id="3.90.1100.10">
    <property type="match status" value="1"/>
</dbReference>
<dbReference type="Gene3D" id="2.30.150.10">
    <property type="entry name" value="DNA-directed RNA polymerase, beta subunit, external 1 domain"/>
    <property type="match status" value="1"/>
</dbReference>
<dbReference type="Gene3D" id="2.40.270.10">
    <property type="entry name" value="DNA-directed RNA polymerase, subunit 2, domain 6"/>
    <property type="match status" value="1"/>
</dbReference>
<dbReference type="Gene3D" id="3.90.1800.10">
    <property type="entry name" value="RNA polymerase alpha subunit dimerisation domain"/>
    <property type="match status" value="1"/>
</dbReference>
<dbReference type="Gene3D" id="3.90.1110.10">
    <property type="entry name" value="RNA polymerase Rpb2, domain 2"/>
    <property type="match status" value="1"/>
</dbReference>
<dbReference type="HAMAP" id="MF_01321">
    <property type="entry name" value="RNApol_bact_RpoB"/>
    <property type="match status" value="1"/>
</dbReference>
<dbReference type="InterPro" id="IPR042107">
    <property type="entry name" value="DNA-dir_RNA_pol_bsu_ext_1_sf"/>
</dbReference>
<dbReference type="InterPro" id="IPR019462">
    <property type="entry name" value="DNA-dir_RNA_pol_bsu_external_1"/>
</dbReference>
<dbReference type="InterPro" id="IPR015712">
    <property type="entry name" value="DNA-dir_RNA_pol_su2"/>
</dbReference>
<dbReference type="InterPro" id="IPR007120">
    <property type="entry name" value="DNA-dir_RNAP_su2_dom"/>
</dbReference>
<dbReference type="InterPro" id="IPR037033">
    <property type="entry name" value="DNA-dir_RNAP_su2_hyb_sf"/>
</dbReference>
<dbReference type="InterPro" id="IPR010243">
    <property type="entry name" value="RNA_pol_bsu_bac"/>
</dbReference>
<dbReference type="InterPro" id="IPR007121">
    <property type="entry name" value="RNA_pol_bsu_CS"/>
</dbReference>
<dbReference type="InterPro" id="IPR007644">
    <property type="entry name" value="RNA_pol_bsu_protrusion"/>
</dbReference>
<dbReference type="InterPro" id="IPR007642">
    <property type="entry name" value="RNA_pol_Rpb2_2"/>
</dbReference>
<dbReference type="InterPro" id="IPR037034">
    <property type="entry name" value="RNA_pol_Rpb2_2_sf"/>
</dbReference>
<dbReference type="InterPro" id="IPR007645">
    <property type="entry name" value="RNA_pol_Rpb2_3"/>
</dbReference>
<dbReference type="InterPro" id="IPR007641">
    <property type="entry name" value="RNA_pol_Rpb2_7"/>
</dbReference>
<dbReference type="InterPro" id="IPR014724">
    <property type="entry name" value="RNA_pol_RPB2_OB-fold"/>
</dbReference>
<dbReference type="NCBIfam" id="NF001616">
    <property type="entry name" value="PRK00405.1"/>
    <property type="match status" value="1"/>
</dbReference>
<dbReference type="NCBIfam" id="TIGR02013">
    <property type="entry name" value="rpoB"/>
    <property type="match status" value="1"/>
</dbReference>
<dbReference type="PANTHER" id="PTHR20856">
    <property type="entry name" value="DNA-DIRECTED RNA POLYMERASE I SUBUNIT 2"/>
    <property type="match status" value="1"/>
</dbReference>
<dbReference type="Pfam" id="PF04563">
    <property type="entry name" value="RNA_pol_Rpb2_1"/>
    <property type="match status" value="1"/>
</dbReference>
<dbReference type="Pfam" id="PF04561">
    <property type="entry name" value="RNA_pol_Rpb2_2"/>
    <property type="match status" value="1"/>
</dbReference>
<dbReference type="Pfam" id="PF04565">
    <property type="entry name" value="RNA_pol_Rpb2_3"/>
    <property type="match status" value="1"/>
</dbReference>
<dbReference type="Pfam" id="PF10385">
    <property type="entry name" value="RNA_pol_Rpb2_45"/>
    <property type="match status" value="1"/>
</dbReference>
<dbReference type="Pfam" id="PF00562">
    <property type="entry name" value="RNA_pol_Rpb2_6"/>
    <property type="match status" value="1"/>
</dbReference>
<dbReference type="Pfam" id="PF04560">
    <property type="entry name" value="RNA_pol_Rpb2_7"/>
    <property type="match status" value="1"/>
</dbReference>
<dbReference type="SUPFAM" id="SSF64484">
    <property type="entry name" value="beta and beta-prime subunits of DNA dependent RNA-polymerase"/>
    <property type="match status" value="1"/>
</dbReference>
<dbReference type="PROSITE" id="PS01166">
    <property type="entry name" value="RNA_POL_BETA"/>
    <property type="match status" value="1"/>
</dbReference>
<accession>P51252</accession>
<comment type="function">
    <text evidence="1">DNA-dependent RNA polymerase catalyzes the transcription of DNA into RNA using the four ribonucleoside triphosphates as substrates.</text>
</comment>
<comment type="catalytic activity">
    <reaction evidence="1">
        <text>RNA(n) + a ribonucleoside 5'-triphosphate = RNA(n+1) + diphosphate</text>
        <dbReference type="Rhea" id="RHEA:21248"/>
        <dbReference type="Rhea" id="RHEA-COMP:14527"/>
        <dbReference type="Rhea" id="RHEA-COMP:17342"/>
        <dbReference type="ChEBI" id="CHEBI:33019"/>
        <dbReference type="ChEBI" id="CHEBI:61557"/>
        <dbReference type="ChEBI" id="CHEBI:140395"/>
        <dbReference type="EC" id="2.7.7.6"/>
    </reaction>
</comment>
<comment type="subunit">
    <text evidence="1">In plastids the minimal PEP RNA polymerase catalytic core is composed of four subunits: alpha, beta, beta', and beta''. When a (nuclear-encoded) sigma factor is associated with the core the holoenzyme is formed, which can initiate transcription.</text>
</comment>
<comment type="subcellular location">
    <subcellularLocation>
        <location>Plastid</location>
        <location>Chloroplast</location>
    </subcellularLocation>
</comment>
<comment type="similarity">
    <text evidence="1">Belongs to the RNA polymerase beta chain family.</text>
</comment>
<feature type="chain" id="PRO_0000048042" description="DNA-directed RNA polymerase subunit beta">
    <location>
        <begin position="1"/>
        <end position="1143"/>
    </location>
</feature>